<keyword id="KW-0067">ATP-binding</keyword>
<keyword id="KW-0436">Ligase</keyword>
<keyword id="KW-0547">Nucleotide-binding</keyword>
<keyword id="KW-0554">One-carbon metabolism</keyword>
<keyword id="KW-1185">Reference proteome</keyword>
<accession>Q5M4U2</accession>
<gene>
    <name evidence="1" type="primary">fhs</name>
    <name type="ordered locus">stu0791</name>
</gene>
<feature type="chain" id="PRO_0000199399" description="Formate--tetrahydrofolate ligase">
    <location>
        <begin position="1"/>
        <end position="556"/>
    </location>
</feature>
<feature type="binding site" evidence="1">
    <location>
        <begin position="65"/>
        <end position="72"/>
    </location>
    <ligand>
        <name>ATP</name>
        <dbReference type="ChEBI" id="CHEBI:30616"/>
    </ligand>
</feature>
<comment type="catalytic activity">
    <reaction evidence="1">
        <text>(6S)-5,6,7,8-tetrahydrofolate + formate + ATP = (6R)-10-formyltetrahydrofolate + ADP + phosphate</text>
        <dbReference type="Rhea" id="RHEA:20221"/>
        <dbReference type="ChEBI" id="CHEBI:15740"/>
        <dbReference type="ChEBI" id="CHEBI:30616"/>
        <dbReference type="ChEBI" id="CHEBI:43474"/>
        <dbReference type="ChEBI" id="CHEBI:57453"/>
        <dbReference type="ChEBI" id="CHEBI:195366"/>
        <dbReference type="ChEBI" id="CHEBI:456216"/>
        <dbReference type="EC" id="6.3.4.3"/>
    </reaction>
</comment>
<comment type="pathway">
    <text evidence="1">One-carbon metabolism; tetrahydrofolate interconversion.</text>
</comment>
<comment type="similarity">
    <text evidence="1">Belongs to the formate--tetrahydrofolate ligase family.</text>
</comment>
<sequence length="556" mass="59778">MKTDIEIAQSVELKPITEVVEKVGIGFDDLELYGKYKAKLSFDKINEVKDDKPGKLILVTAINPTPAGEGKSTISIGLADALNKIGKKTMIALREPSLGPVMGIKGGAAGGGYAQVLPMEDINLHFTGDMHAITTANNALSALLDNHIHQGNALGIDQRRIIWKRVVDLNDRALRHVTVGLGGPLNGIPREDGFDITVASEIMAILCLATDINDLKERLANIVVAYRYDRTPVYVRDLEIEGALTLILKDAIKPNLVQTIYGTPALVHGGPFANIAHGCNSVLATSTALRLADYTVTEAGFGADLGAEKFLDIKTPNLPTTPDAVVIVATLRALKMHGGVAKTDLSEENVQAVRDGFSNLKRHVENIRKFGIPVVVAINEFVADTEAEIAALKELCSEIKVPVELASVWANGADGGIDLANTVVDVVENGNADYKRLYSDDDSLEEKITKIVTEIYGGKSVVFEKKAKNQLKQFAEFGWDKLPVCMAKTQYSFSDNQFLLGAPEGFDITIREFVPKTGAGFIVALTGDVMTMPGLPKAPAALKMDVTEDGTAVGLF</sequence>
<proteinExistence type="inferred from homology"/>
<evidence type="ECO:0000255" key="1">
    <source>
        <dbReference type="HAMAP-Rule" id="MF_01543"/>
    </source>
</evidence>
<organism>
    <name type="scientific">Streptococcus thermophilus (strain ATCC BAA-250 / LMG 18311)</name>
    <dbReference type="NCBI Taxonomy" id="264199"/>
    <lineage>
        <taxon>Bacteria</taxon>
        <taxon>Bacillati</taxon>
        <taxon>Bacillota</taxon>
        <taxon>Bacilli</taxon>
        <taxon>Lactobacillales</taxon>
        <taxon>Streptococcaceae</taxon>
        <taxon>Streptococcus</taxon>
    </lineage>
</organism>
<name>FTHS_STRT2</name>
<protein>
    <recommendedName>
        <fullName evidence="1">Formate--tetrahydrofolate ligase</fullName>
        <ecNumber evidence="1">6.3.4.3</ecNumber>
    </recommendedName>
    <alternativeName>
        <fullName evidence="1">Formyltetrahydrofolate synthetase</fullName>
        <shortName evidence="1">FHS</shortName>
        <shortName evidence="1">FTHFS</shortName>
    </alternativeName>
</protein>
<reference key="1">
    <citation type="journal article" date="2004" name="Nat. Biotechnol.">
        <title>Complete sequence and comparative genome analysis of the dairy bacterium Streptococcus thermophilus.</title>
        <authorList>
            <person name="Bolotin A."/>
            <person name="Quinquis B."/>
            <person name="Renault P."/>
            <person name="Sorokin A."/>
            <person name="Ehrlich S.D."/>
            <person name="Kulakauskas S."/>
            <person name="Lapidus A."/>
            <person name="Goltsman E."/>
            <person name="Mazur M."/>
            <person name="Pusch G.D."/>
            <person name="Fonstein M."/>
            <person name="Overbeek R."/>
            <person name="Kyprides N."/>
            <person name="Purnelle B."/>
            <person name="Prozzi D."/>
            <person name="Ngui K."/>
            <person name="Masuy D."/>
            <person name="Hancy F."/>
            <person name="Burteau S."/>
            <person name="Boutry M."/>
            <person name="Delcour J."/>
            <person name="Goffeau A."/>
            <person name="Hols P."/>
        </authorList>
    </citation>
    <scope>NUCLEOTIDE SEQUENCE [LARGE SCALE GENOMIC DNA]</scope>
    <source>
        <strain>ATCC BAA-250 / LMG 18311</strain>
    </source>
</reference>
<dbReference type="EC" id="6.3.4.3" evidence="1"/>
<dbReference type="EMBL" id="CP000023">
    <property type="protein sequence ID" value="AAV60470.1"/>
    <property type="molecule type" value="Genomic_DNA"/>
</dbReference>
<dbReference type="RefSeq" id="WP_011225811.1">
    <property type="nucleotide sequence ID" value="NC_006448.1"/>
</dbReference>
<dbReference type="SMR" id="Q5M4U2"/>
<dbReference type="STRING" id="264199.stu0791"/>
<dbReference type="GeneID" id="66898686"/>
<dbReference type="KEGG" id="stl:stu0791"/>
<dbReference type="PATRIC" id="fig|264199.4.peg.787"/>
<dbReference type="eggNOG" id="COG2759">
    <property type="taxonomic scope" value="Bacteria"/>
</dbReference>
<dbReference type="HOGENOM" id="CLU_003601_3_3_9"/>
<dbReference type="UniPathway" id="UPA00193"/>
<dbReference type="Proteomes" id="UP000001170">
    <property type="component" value="Chromosome"/>
</dbReference>
<dbReference type="GO" id="GO:0005524">
    <property type="term" value="F:ATP binding"/>
    <property type="evidence" value="ECO:0007669"/>
    <property type="project" value="UniProtKB-UniRule"/>
</dbReference>
<dbReference type="GO" id="GO:0004329">
    <property type="term" value="F:formate-tetrahydrofolate ligase activity"/>
    <property type="evidence" value="ECO:0007669"/>
    <property type="project" value="UniProtKB-UniRule"/>
</dbReference>
<dbReference type="GO" id="GO:0035999">
    <property type="term" value="P:tetrahydrofolate interconversion"/>
    <property type="evidence" value="ECO:0007669"/>
    <property type="project" value="UniProtKB-UniRule"/>
</dbReference>
<dbReference type="CDD" id="cd00477">
    <property type="entry name" value="FTHFS"/>
    <property type="match status" value="1"/>
</dbReference>
<dbReference type="FunFam" id="3.30.1510.10:FF:000001">
    <property type="entry name" value="Formate--tetrahydrofolate ligase"/>
    <property type="match status" value="1"/>
</dbReference>
<dbReference type="FunFam" id="3.10.410.10:FF:000001">
    <property type="entry name" value="Putative formate--tetrahydrofolate ligase"/>
    <property type="match status" value="1"/>
</dbReference>
<dbReference type="Gene3D" id="3.30.1510.10">
    <property type="entry name" value="Domain 2, N(10)-formyltetrahydrofolate synthetase"/>
    <property type="match status" value="1"/>
</dbReference>
<dbReference type="Gene3D" id="3.10.410.10">
    <property type="entry name" value="Formyltetrahydrofolate synthetase, domain 3"/>
    <property type="match status" value="1"/>
</dbReference>
<dbReference type="Gene3D" id="3.40.50.300">
    <property type="entry name" value="P-loop containing nucleotide triphosphate hydrolases"/>
    <property type="match status" value="1"/>
</dbReference>
<dbReference type="HAMAP" id="MF_01543">
    <property type="entry name" value="FTHFS"/>
    <property type="match status" value="1"/>
</dbReference>
<dbReference type="InterPro" id="IPR000559">
    <property type="entry name" value="Formate_THF_ligase"/>
</dbReference>
<dbReference type="InterPro" id="IPR020628">
    <property type="entry name" value="Formate_THF_ligase_CS"/>
</dbReference>
<dbReference type="InterPro" id="IPR027417">
    <property type="entry name" value="P-loop_NTPase"/>
</dbReference>
<dbReference type="NCBIfam" id="NF010030">
    <property type="entry name" value="PRK13505.1"/>
    <property type="match status" value="1"/>
</dbReference>
<dbReference type="Pfam" id="PF01268">
    <property type="entry name" value="FTHFS"/>
    <property type="match status" value="1"/>
</dbReference>
<dbReference type="SUPFAM" id="SSF52540">
    <property type="entry name" value="P-loop containing nucleoside triphosphate hydrolases"/>
    <property type="match status" value="1"/>
</dbReference>
<dbReference type="PROSITE" id="PS00721">
    <property type="entry name" value="FTHFS_1"/>
    <property type="match status" value="1"/>
</dbReference>
<dbReference type="PROSITE" id="PS00722">
    <property type="entry name" value="FTHFS_2"/>
    <property type="match status" value="1"/>
</dbReference>